<organism>
    <name type="scientific">Listeria monocytogenes serotype 4a (strain HCC23)</name>
    <dbReference type="NCBI Taxonomy" id="552536"/>
    <lineage>
        <taxon>Bacteria</taxon>
        <taxon>Bacillati</taxon>
        <taxon>Bacillota</taxon>
        <taxon>Bacilli</taxon>
        <taxon>Bacillales</taxon>
        <taxon>Listeriaceae</taxon>
        <taxon>Listeria</taxon>
    </lineage>
</organism>
<comment type="similarity">
    <text evidence="1">Belongs to the UPF0302 family.</text>
</comment>
<proteinExistence type="inferred from homology"/>
<protein>
    <recommendedName>
        <fullName evidence="1">UPF0302 protein LMHCC_0635</fullName>
    </recommendedName>
</protein>
<name>Y635_LISMH</name>
<gene>
    <name type="ordered locus">LMHCC_0635</name>
</gene>
<reference key="1">
    <citation type="journal article" date="2011" name="J. Bacteriol.">
        <title>Genome sequence of lineage III Listeria monocytogenes strain HCC23.</title>
        <authorList>
            <person name="Steele C.L."/>
            <person name="Donaldson J.R."/>
            <person name="Paul D."/>
            <person name="Banes M.M."/>
            <person name="Arick T."/>
            <person name="Bridges S.M."/>
            <person name="Lawrence M.L."/>
        </authorList>
    </citation>
    <scope>NUCLEOTIDE SEQUENCE [LARGE SCALE GENOMIC DNA]</scope>
    <source>
        <strain>HCC23</strain>
    </source>
</reference>
<accession>B8DC05</accession>
<dbReference type="EMBL" id="CP001175">
    <property type="protein sequence ID" value="ACK38991.1"/>
    <property type="molecule type" value="Genomic_DNA"/>
</dbReference>
<dbReference type="RefSeq" id="WP_012581067.1">
    <property type="nucleotide sequence ID" value="NC_011660.1"/>
</dbReference>
<dbReference type="SMR" id="B8DC05"/>
<dbReference type="KEGG" id="lmh:LMHCC_0635"/>
<dbReference type="HOGENOM" id="CLU_126019_0_0_9"/>
<dbReference type="Gene3D" id="3.40.1530.30">
    <property type="entry name" value="Uncharacterised family UPF0302, N-terminal domain"/>
    <property type="match status" value="1"/>
</dbReference>
<dbReference type="Gene3D" id="4.10.810.10">
    <property type="entry name" value="Virus Scaffolding Protein, Chain A"/>
    <property type="match status" value="1"/>
</dbReference>
<dbReference type="HAMAP" id="MF_00760">
    <property type="entry name" value="UPF0302"/>
    <property type="match status" value="1"/>
</dbReference>
<dbReference type="InterPro" id="IPR014957">
    <property type="entry name" value="IDEAL_dom"/>
</dbReference>
<dbReference type="InterPro" id="IPR011188">
    <property type="entry name" value="UPF0302"/>
</dbReference>
<dbReference type="InterPro" id="IPR014963">
    <property type="entry name" value="UPF0302_N"/>
</dbReference>
<dbReference type="InterPro" id="IPR038091">
    <property type="entry name" value="UPF0302_N_sf"/>
</dbReference>
<dbReference type="InterPro" id="IPR027393">
    <property type="entry name" value="Virus_scaffolding_prot_C"/>
</dbReference>
<dbReference type="NCBIfam" id="NF002965">
    <property type="entry name" value="PRK03636.1"/>
    <property type="match status" value="1"/>
</dbReference>
<dbReference type="Pfam" id="PF08858">
    <property type="entry name" value="IDEAL"/>
    <property type="match status" value="1"/>
</dbReference>
<dbReference type="Pfam" id="PF08864">
    <property type="entry name" value="UPF0302"/>
    <property type="match status" value="1"/>
</dbReference>
<dbReference type="PIRSF" id="PIRSF007165">
    <property type="entry name" value="UCP007165"/>
    <property type="match status" value="1"/>
</dbReference>
<dbReference type="SMART" id="SM00914">
    <property type="entry name" value="IDEAL"/>
    <property type="match status" value="1"/>
</dbReference>
<evidence type="ECO:0000255" key="1">
    <source>
        <dbReference type="HAMAP-Rule" id="MF_00760"/>
    </source>
</evidence>
<feature type="chain" id="PRO_1000148409" description="UPF0302 protein LMHCC_0635">
    <location>
        <begin position="1"/>
        <end position="181"/>
    </location>
</feature>
<sequence length="181" mass="21235">MKASISIDEKKDFIRWFLNKHQMKTREAMWVLNYIAGHDQIVKYVHFVDNLEGCARGLSLSAHGVESEPFLFFKGNIMTTDPEKAFHDIRLNWDEELYVELHFEEAITSPEYALVREDNPFTAVKLADEEKEMADALIYQSVHQFSREKVLQQIDEALDARDEVTFHKLVRILQQMDTVKE</sequence>